<proteinExistence type="predicted"/>
<organism>
    <name type="scientific">Azospirillum lipoferum</name>
    <dbReference type="NCBI Taxonomy" id="193"/>
    <lineage>
        <taxon>Bacteria</taxon>
        <taxon>Pseudomonadati</taxon>
        <taxon>Pseudomonadota</taxon>
        <taxon>Alphaproteobacteria</taxon>
        <taxon>Rhodospirillales</taxon>
        <taxon>Azospirillaceae</taxon>
        <taxon>Azospirillum</taxon>
    </lineage>
</organism>
<evidence type="ECO:0000250" key="1"/>
<evidence type="ECO:0000250" key="2">
    <source>
        <dbReference type="UniProtKB" id="P05407"/>
    </source>
</evidence>
<evidence type="ECO:0000255" key="3">
    <source>
        <dbReference type="PROSITE-ProRule" id="PRU00193"/>
    </source>
</evidence>
<evidence type="ECO:0000256" key="4">
    <source>
        <dbReference type="SAM" id="MobiDB-lite"/>
    </source>
</evidence>
<comment type="function">
    <text>Required for activation of most nif operons, which are directly involved in nitrogen fixation.</text>
</comment>
<comment type="subunit">
    <text>Interacts with sigma-54.</text>
</comment>
<sequence length="624" mass="67119">MPGAMRQSTSNLELLTIYEVSKILGSSLDLQQTLREVLRALAYQLQMHRGRVYLVGEDNVLRLVAANGLSNEAAAQIEFRDGEGITGRILKTGMPAVVPNLAEEPLFLNRTGGREDLDEQVASLVGVPIKAAGVVVGVLTIDRISDEGPQGHFGSDVRFLTMVANLIGQTVRLPHVAEEPLRDAETFRMQKELRPIAAPINDVVCTSPNMLEVMAQVHRVAPFKSTVLIRGESGTGKELIARAIHNMSPRKDAPFIRVNCAALPESLLESELFGHEKGAFTGAQKDHKGRFELASGGTLFLDEIGDISPNFQAKLLRVLQEQEFERVGGSKTIKTDVRLICATNLNLEEAIGHGKFRADLYFRINVVTIHLPPLRERRQDIGPLARHFVAKFAKDNGMTLVMEDEALEVLNRCTWPGNVRELENCIERAATQSRDGIIRTESLSCSLNLCNSSVLFQYRTLGASVGGLAPSMGPGSVNRVPPGRPGVPAPANAPKAPAMPAPVPEPAGAGSAWPACASGCSAGPSPVCGAAQPAVPVPLIPLPLPEPSAPAAAAPAPTSVTNAAPPPAAEVPLDEPESGSLRDRLLWAMERTGWVQAKAARLLGMTTRQVSYALRKYNIEIKRF</sequence>
<protein>
    <recommendedName>
        <fullName>Nif-specific regulatory protein</fullName>
    </recommendedName>
</protein>
<accession>P54929</accession>
<keyword id="KW-0010">Activator</keyword>
<keyword id="KW-0067">ATP-binding</keyword>
<keyword id="KW-0238">DNA-binding</keyword>
<keyword id="KW-0479">Metal-binding</keyword>
<keyword id="KW-0535">Nitrogen fixation</keyword>
<keyword id="KW-0547">Nucleotide-binding</keyword>
<keyword id="KW-0804">Transcription</keyword>
<keyword id="KW-0805">Transcription regulation</keyword>
<keyword id="KW-0902">Two-component regulatory system</keyword>
<gene>
    <name type="primary">nifA</name>
</gene>
<dbReference type="EMBL" id="D13799">
    <property type="protein sequence ID" value="BAA02956.1"/>
    <property type="molecule type" value="Genomic_DNA"/>
</dbReference>
<dbReference type="PIR" id="JC5471">
    <property type="entry name" value="JC5471"/>
</dbReference>
<dbReference type="SMR" id="P54929"/>
<dbReference type="GO" id="GO:0005524">
    <property type="term" value="F:ATP binding"/>
    <property type="evidence" value="ECO:0007669"/>
    <property type="project" value="UniProtKB-KW"/>
</dbReference>
<dbReference type="GO" id="GO:0016887">
    <property type="term" value="F:ATP hydrolysis activity"/>
    <property type="evidence" value="ECO:0007669"/>
    <property type="project" value="InterPro"/>
</dbReference>
<dbReference type="GO" id="GO:0003700">
    <property type="term" value="F:DNA-binding transcription factor activity"/>
    <property type="evidence" value="ECO:0007669"/>
    <property type="project" value="InterPro"/>
</dbReference>
<dbReference type="GO" id="GO:0046872">
    <property type="term" value="F:metal ion binding"/>
    <property type="evidence" value="ECO:0007669"/>
    <property type="project" value="UniProtKB-KW"/>
</dbReference>
<dbReference type="GO" id="GO:0043565">
    <property type="term" value="F:sequence-specific DNA binding"/>
    <property type="evidence" value="ECO:0007669"/>
    <property type="project" value="InterPro"/>
</dbReference>
<dbReference type="GO" id="GO:0009399">
    <property type="term" value="P:nitrogen fixation"/>
    <property type="evidence" value="ECO:0007669"/>
    <property type="project" value="UniProtKB-KW"/>
</dbReference>
<dbReference type="GO" id="GO:0000160">
    <property type="term" value="P:phosphorelay signal transduction system"/>
    <property type="evidence" value="ECO:0007669"/>
    <property type="project" value="UniProtKB-KW"/>
</dbReference>
<dbReference type="CDD" id="cd00009">
    <property type="entry name" value="AAA"/>
    <property type="match status" value="1"/>
</dbReference>
<dbReference type="FunFam" id="1.10.10.60:FF:000765">
    <property type="match status" value="1"/>
</dbReference>
<dbReference type="FunFam" id="1.10.8.60:FF:000045">
    <property type="entry name" value="Anaerobic nitric oxide reductase transcription regulator NorR"/>
    <property type="match status" value="1"/>
</dbReference>
<dbReference type="FunFam" id="3.40.50.300:FF:000006">
    <property type="entry name" value="DNA-binding transcriptional regulator NtrC"/>
    <property type="match status" value="1"/>
</dbReference>
<dbReference type="FunFam" id="3.30.450.40:FF:000081">
    <property type="entry name" value="Vanadium nitrogenase sigma54-dependent transcriptional activator, VnfA"/>
    <property type="match status" value="1"/>
</dbReference>
<dbReference type="Gene3D" id="1.10.8.60">
    <property type="match status" value="1"/>
</dbReference>
<dbReference type="Gene3D" id="3.30.450.40">
    <property type="match status" value="1"/>
</dbReference>
<dbReference type="Gene3D" id="1.10.10.60">
    <property type="entry name" value="Homeodomain-like"/>
    <property type="match status" value="1"/>
</dbReference>
<dbReference type="Gene3D" id="3.40.50.300">
    <property type="entry name" value="P-loop containing nucleotide triphosphate hydrolases"/>
    <property type="match status" value="1"/>
</dbReference>
<dbReference type="InterPro" id="IPR003593">
    <property type="entry name" value="AAA+_ATPase"/>
</dbReference>
<dbReference type="InterPro" id="IPR003018">
    <property type="entry name" value="GAF"/>
</dbReference>
<dbReference type="InterPro" id="IPR029016">
    <property type="entry name" value="GAF-like_dom_sf"/>
</dbReference>
<dbReference type="InterPro" id="IPR002197">
    <property type="entry name" value="HTH_Fis"/>
</dbReference>
<dbReference type="InterPro" id="IPR010113">
    <property type="entry name" value="Nif-specific_regulatory_prot"/>
</dbReference>
<dbReference type="InterPro" id="IPR027417">
    <property type="entry name" value="P-loop_NTPase"/>
</dbReference>
<dbReference type="InterPro" id="IPR002078">
    <property type="entry name" value="Sigma_54_int"/>
</dbReference>
<dbReference type="InterPro" id="IPR025662">
    <property type="entry name" value="Sigma_54_int_dom_ATP-bd_1"/>
</dbReference>
<dbReference type="InterPro" id="IPR025943">
    <property type="entry name" value="Sigma_54_int_dom_ATP-bd_2"/>
</dbReference>
<dbReference type="InterPro" id="IPR025944">
    <property type="entry name" value="Sigma_54_int_dom_CS"/>
</dbReference>
<dbReference type="NCBIfam" id="TIGR01817">
    <property type="entry name" value="nifA"/>
    <property type="match status" value="1"/>
</dbReference>
<dbReference type="PANTHER" id="PTHR32071:SF117">
    <property type="entry name" value="PTS-DEPENDENT DIHYDROXYACETONE KINASE OPERON REGULATORY PROTEIN-RELATED"/>
    <property type="match status" value="1"/>
</dbReference>
<dbReference type="PANTHER" id="PTHR32071">
    <property type="entry name" value="TRANSCRIPTIONAL REGULATORY PROTEIN"/>
    <property type="match status" value="1"/>
</dbReference>
<dbReference type="Pfam" id="PF01590">
    <property type="entry name" value="GAF"/>
    <property type="match status" value="1"/>
</dbReference>
<dbReference type="Pfam" id="PF02954">
    <property type="entry name" value="HTH_8"/>
    <property type="match status" value="1"/>
</dbReference>
<dbReference type="Pfam" id="PF00158">
    <property type="entry name" value="Sigma54_activat"/>
    <property type="match status" value="1"/>
</dbReference>
<dbReference type="PRINTS" id="PR01590">
    <property type="entry name" value="HTHFIS"/>
</dbReference>
<dbReference type="SMART" id="SM00382">
    <property type="entry name" value="AAA"/>
    <property type="match status" value="1"/>
</dbReference>
<dbReference type="SMART" id="SM00065">
    <property type="entry name" value="GAF"/>
    <property type="match status" value="1"/>
</dbReference>
<dbReference type="SUPFAM" id="SSF55781">
    <property type="entry name" value="GAF domain-like"/>
    <property type="match status" value="1"/>
</dbReference>
<dbReference type="SUPFAM" id="SSF52540">
    <property type="entry name" value="P-loop containing nucleoside triphosphate hydrolases"/>
    <property type="match status" value="1"/>
</dbReference>
<dbReference type="PROSITE" id="PS00675">
    <property type="entry name" value="SIGMA54_INTERACT_1"/>
    <property type="match status" value="1"/>
</dbReference>
<dbReference type="PROSITE" id="PS00676">
    <property type="entry name" value="SIGMA54_INTERACT_2"/>
    <property type="match status" value="1"/>
</dbReference>
<dbReference type="PROSITE" id="PS00688">
    <property type="entry name" value="SIGMA54_INTERACT_3"/>
    <property type="match status" value="1"/>
</dbReference>
<dbReference type="PROSITE" id="PS50045">
    <property type="entry name" value="SIGMA54_INTERACT_4"/>
    <property type="match status" value="1"/>
</dbReference>
<feature type="chain" id="PRO_0000081303" description="Nif-specific regulatory protein">
    <location>
        <begin position="1"/>
        <end position="624"/>
    </location>
</feature>
<feature type="domain" description="GAF">
    <location>
        <begin position="29"/>
        <end position="171"/>
    </location>
</feature>
<feature type="domain" description="Sigma-54 factor interaction" evidence="3">
    <location>
        <begin position="203"/>
        <end position="431"/>
    </location>
</feature>
<feature type="DNA-binding region" description="H-T-H motif" evidence="1">
    <location>
        <begin position="596"/>
        <end position="615"/>
    </location>
</feature>
<feature type="region of interest" description="Inter-domain linker">
    <location>
        <begin position="432"/>
        <end position="581"/>
    </location>
</feature>
<feature type="region of interest" description="Disordered" evidence="4">
    <location>
        <begin position="477"/>
        <end position="508"/>
    </location>
</feature>
<feature type="region of interest" description="Disordered" evidence="4">
    <location>
        <begin position="549"/>
        <end position="578"/>
    </location>
</feature>
<feature type="region of interest" description="C-terminal DNA-binding domain">
    <location>
        <begin position="582"/>
        <end position="624"/>
    </location>
</feature>
<feature type="compositionally biased region" description="Low complexity" evidence="4">
    <location>
        <begin position="549"/>
        <end position="563"/>
    </location>
</feature>
<feature type="binding site" evidence="3">
    <location>
        <begin position="231"/>
        <end position="238"/>
    </location>
    <ligand>
        <name>ATP</name>
        <dbReference type="ChEBI" id="CHEBI:30616"/>
    </ligand>
</feature>
<feature type="binding site" evidence="3">
    <location>
        <begin position="294"/>
        <end position="303"/>
    </location>
    <ligand>
        <name>ATP</name>
        <dbReference type="ChEBI" id="CHEBI:30616"/>
    </ligand>
</feature>
<feature type="binding site" evidence="2">
    <location>
        <position position="445"/>
    </location>
    <ligand>
        <name>a divalent metal cation</name>
        <dbReference type="ChEBI" id="CHEBI:60240"/>
    </ligand>
</feature>
<feature type="binding site" evidence="2">
    <location>
        <position position="450"/>
    </location>
    <ligand>
        <name>a divalent metal cation</name>
        <dbReference type="ChEBI" id="CHEBI:60240"/>
    </ligand>
</feature>
<reference key="1">
    <citation type="submission" date="1992-12" db="EMBL/GenBank/DDBJ databases">
        <authorList>
            <person name="Shigematsu T."/>
            <person name="Hidaka M."/>
            <person name="Masaki H."/>
            <person name="Uozumi T."/>
        </authorList>
    </citation>
    <scope>NUCLEOTIDE SEQUENCE [GENOMIC DNA]</scope>
</reference>
<name>NIFA_AZOLI</name>